<reference key="1">
    <citation type="journal article" date="2003" name="Proc. Natl. Acad. Sci. U.S.A.">
        <title>Genome sequence of the cyanobacterium Prochlorococcus marinus SS120, a nearly minimal oxyphototrophic genome.</title>
        <authorList>
            <person name="Dufresne A."/>
            <person name="Salanoubat M."/>
            <person name="Partensky F."/>
            <person name="Artiguenave F."/>
            <person name="Axmann I.M."/>
            <person name="Barbe V."/>
            <person name="Duprat S."/>
            <person name="Galperin M.Y."/>
            <person name="Koonin E.V."/>
            <person name="Le Gall F."/>
            <person name="Makarova K.S."/>
            <person name="Ostrowski M."/>
            <person name="Oztas S."/>
            <person name="Robert C."/>
            <person name="Rogozin I.B."/>
            <person name="Scanlan D.J."/>
            <person name="Tandeau de Marsac N."/>
            <person name="Weissenbach J."/>
            <person name="Wincker P."/>
            <person name="Wolf Y.I."/>
            <person name="Hess W.R."/>
        </authorList>
    </citation>
    <scope>NUCLEOTIDE SEQUENCE [LARGE SCALE GENOMIC DNA]</scope>
    <source>
        <strain>SARG / CCMP1375 / SS120</strain>
    </source>
</reference>
<sequence>MSDPTYYETMYILRPDIPEDEVEGHLKKYSEVLEKAKAKIIDNQMRGKRRLAYTIGKHKEGIYVQLSHTGNGKHVETLERSMRLSEDVIRYLTVKQYGPLPTKRNTKSQDKEASTTNNENDTKEVKEAKDTKEVKEAKDTKEVKEAKDTKEVKEAKDTKEVKEAKDTKEVKEAKDTKEVKEAKDTKEVKEAKDTKEVKEAKDTKEVKEEG</sequence>
<dbReference type="EMBL" id="AE017126">
    <property type="protein sequence ID" value="AAQ00918.1"/>
    <property type="molecule type" value="Genomic_DNA"/>
</dbReference>
<dbReference type="RefSeq" id="NP_876265.1">
    <property type="nucleotide sequence ID" value="NC_005042.1"/>
</dbReference>
<dbReference type="SMR" id="Q7V9F9"/>
<dbReference type="STRING" id="167539.Pro_1874"/>
<dbReference type="EnsemblBacteria" id="AAQ00918">
    <property type="protein sequence ID" value="AAQ00918"/>
    <property type="gene ID" value="Pro_1874"/>
</dbReference>
<dbReference type="KEGG" id="pma:Pro_1874"/>
<dbReference type="PATRIC" id="fig|167539.5.peg.1977"/>
<dbReference type="eggNOG" id="COG0360">
    <property type="taxonomic scope" value="Bacteria"/>
</dbReference>
<dbReference type="HOGENOM" id="CLU_113441_4_2_3"/>
<dbReference type="OrthoDB" id="9812702at2"/>
<dbReference type="Proteomes" id="UP000001420">
    <property type="component" value="Chromosome"/>
</dbReference>
<dbReference type="GO" id="GO:0005737">
    <property type="term" value="C:cytoplasm"/>
    <property type="evidence" value="ECO:0007669"/>
    <property type="project" value="UniProtKB-ARBA"/>
</dbReference>
<dbReference type="GO" id="GO:1990904">
    <property type="term" value="C:ribonucleoprotein complex"/>
    <property type="evidence" value="ECO:0007669"/>
    <property type="project" value="UniProtKB-KW"/>
</dbReference>
<dbReference type="GO" id="GO:0005840">
    <property type="term" value="C:ribosome"/>
    <property type="evidence" value="ECO:0007669"/>
    <property type="project" value="UniProtKB-KW"/>
</dbReference>
<dbReference type="GO" id="GO:0070181">
    <property type="term" value="F:small ribosomal subunit rRNA binding"/>
    <property type="evidence" value="ECO:0007669"/>
    <property type="project" value="TreeGrafter"/>
</dbReference>
<dbReference type="GO" id="GO:0003735">
    <property type="term" value="F:structural constituent of ribosome"/>
    <property type="evidence" value="ECO:0007669"/>
    <property type="project" value="InterPro"/>
</dbReference>
<dbReference type="GO" id="GO:0006412">
    <property type="term" value="P:translation"/>
    <property type="evidence" value="ECO:0007669"/>
    <property type="project" value="UniProtKB-UniRule"/>
</dbReference>
<dbReference type="CDD" id="cd15487">
    <property type="entry name" value="bS6_chloro_cyano"/>
    <property type="match status" value="1"/>
</dbReference>
<dbReference type="Gene3D" id="3.30.70.60">
    <property type="match status" value="1"/>
</dbReference>
<dbReference type="HAMAP" id="MF_00360">
    <property type="entry name" value="Ribosomal_bS6"/>
    <property type="match status" value="1"/>
</dbReference>
<dbReference type="InterPro" id="IPR000529">
    <property type="entry name" value="Ribosomal_bS6"/>
</dbReference>
<dbReference type="InterPro" id="IPR035980">
    <property type="entry name" value="Ribosomal_bS6_sf"/>
</dbReference>
<dbReference type="InterPro" id="IPR020814">
    <property type="entry name" value="Ribosomal_S6_plastid/chlpt"/>
</dbReference>
<dbReference type="InterPro" id="IPR014717">
    <property type="entry name" value="Transl_elong_EF1B/ribsomal_bS6"/>
</dbReference>
<dbReference type="NCBIfam" id="TIGR00166">
    <property type="entry name" value="S6"/>
    <property type="match status" value="1"/>
</dbReference>
<dbReference type="PANTHER" id="PTHR21011">
    <property type="entry name" value="MITOCHONDRIAL 28S RIBOSOMAL PROTEIN S6"/>
    <property type="match status" value="1"/>
</dbReference>
<dbReference type="PANTHER" id="PTHR21011:SF1">
    <property type="entry name" value="SMALL RIBOSOMAL SUBUNIT PROTEIN BS6M"/>
    <property type="match status" value="1"/>
</dbReference>
<dbReference type="Pfam" id="PF01250">
    <property type="entry name" value="Ribosomal_S6"/>
    <property type="match status" value="1"/>
</dbReference>
<dbReference type="SUPFAM" id="SSF54995">
    <property type="entry name" value="Ribosomal protein S6"/>
    <property type="match status" value="1"/>
</dbReference>
<organism>
    <name type="scientific">Prochlorococcus marinus (strain SARG / CCMP1375 / SS120)</name>
    <dbReference type="NCBI Taxonomy" id="167539"/>
    <lineage>
        <taxon>Bacteria</taxon>
        <taxon>Bacillati</taxon>
        <taxon>Cyanobacteriota</taxon>
        <taxon>Cyanophyceae</taxon>
        <taxon>Synechococcales</taxon>
        <taxon>Prochlorococcaceae</taxon>
        <taxon>Prochlorococcus</taxon>
    </lineage>
</organism>
<name>RS6_PROMA</name>
<accession>Q7V9F9</accession>
<feature type="chain" id="PRO_0000176816" description="Small ribosomal subunit protein bS6">
    <location>
        <begin position="1"/>
        <end position="210"/>
    </location>
</feature>
<feature type="region of interest" description="Disordered" evidence="2">
    <location>
        <begin position="99"/>
        <end position="210"/>
    </location>
</feature>
<feature type="compositionally biased region" description="Basic and acidic residues" evidence="2">
    <location>
        <begin position="120"/>
        <end position="210"/>
    </location>
</feature>
<keyword id="KW-1185">Reference proteome</keyword>
<keyword id="KW-0687">Ribonucleoprotein</keyword>
<keyword id="KW-0689">Ribosomal protein</keyword>
<keyword id="KW-0694">RNA-binding</keyword>
<keyword id="KW-0699">rRNA-binding</keyword>
<protein>
    <recommendedName>
        <fullName evidence="1">Small ribosomal subunit protein bS6</fullName>
    </recommendedName>
    <alternativeName>
        <fullName evidence="3">30S ribosomal protein S6</fullName>
    </alternativeName>
</protein>
<evidence type="ECO:0000255" key="1">
    <source>
        <dbReference type="HAMAP-Rule" id="MF_00360"/>
    </source>
</evidence>
<evidence type="ECO:0000256" key="2">
    <source>
        <dbReference type="SAM" id="MobiDB-lite"/>
    </source>
</evidence>
<evidence type="ECO:0000305" key="3"/>
<comment type="function">
    <text evidence="1">Binds together with bS18 to 16S ribosomal RNA.</text>
</comment>
<comment type="similarity">
    <text evidence="1">Belongs to the bacterial ribosomal protein bS6 family.</text>
</comment>
<gene>
    <name evidence="1" type="primary">rpsF</name>
    <name evidence="1" type="synonym">rps6</name>
    <name type="ordered locus">Pro_1874</name>
</gene>
<proteinExistence type="inferred from homology"/>